<gene>
    <name evidence="1" type="primary">gch3</name>
    <name type="ordered locus">NP_4142A</name>
</gene>
<dbReference type="EC" id="3.5.4.29" evidence="1"/>
<dbReference type="EMBL" id="CR936257">
    <property type="protein sequence ID" value="CAI50162.1"/>
    <property type="molecule type" value="Genomic_DNA"/>
</dbReference>
<dbReference type="RefSeq" id="WP_011323778.1">
    <property type="nucleotide sequence ID" value="NC_007426.1"/>
</dbReference>
<dbReference type="SMR" id="Q3INZ0"/>
<dbReference type="STRING" id="348780.NP_4142A"/>
<dbReference type="EnsemblBacteria" id="CAI50162">
    <property type="protein sequence ID" value="CAI50162"/>
    <property type="gene ID" value="NP_4142A"/>
</dbReference>
<dbReference type="GeneID" id="3702742"/>
<dbReference type="KEGG" id="nph:NP_4142A"/>
<dbReference type="eggNOG" id="arCOG04202">
    <property type="taxonomic scope" value="Archaea"/>
</dbReference>
<dbReference type="HOGENOM" id="CLU_080076_0_0_2"/>
<dbReference type="OrthoDB" id="25211at2157"/>
<dbReference type="Proteomes" id="UP000002698">
    <property type="component" value="Chromosome"/>
</dbReference>
<dbReference type="GO" id="GO:0005525">
    <property type="term" value="F:GTP binding"/>
    <property type="evidence" value="ECO:0007669"/>
    <property type="project" value="UniProtKB-KW"/>
</dbReference>
<dbReference type="GO" id="GO:0043740">
    <property type="term" value="F:GTP cyclohydrolase IIa activity"/>
    <property type="evidence" value="ECO:0007669"/>
    <property type="project" value="UniProtKB-EC"/>
</dbReference>
<dbReference type="GO" id="GO:0009058">
    <property type="term" value="P:biosynthetic process"/>
    <property type="evidence" value="ECO:0007669"/>
    <property type="project" value="InterPro"/>
</dbReference>
<dbReference type="Gene3D" id="3.30.70.270">
    <property type="match status" value="1"/>
</dbReference>
<dbReference type="Gene3D" id="3.30.70.1230">
    <property type="entry name" value="Nucleotide cyclase"/>
    <property type="match status" value="1"/>
</dbReference>
<dbReference type="HAMAP" id="MF_00608">
    <property type="entry name" value="GTP_cyclohydro_3"/>
    <property type="match status" value="1"/>
</dbReference>
<dbReference type="InterPro" id="IPR007839">
    <property type="entry name" value="GTP_CycHdrlase_3"/>
</dbReference>
<dbReference type="InterPro" id="IPR029787">
    <property type="entry name" value="Nucleotide_cyclase"/>
</dbReference>
<dbReference type="InterPro" id="IPR043128">
    <property type="entry name" value="Rev_trsase/Diguanyl_cyclase"/>
</dbReference>
<dbReference type="NCBIfam" id="NF002587">
    <property type="entry name" value="PRK02240.1"/>
    <property type="match status" value="1"/>
</dbReference>
<dbReference type="PANTHER" id="PTHR42202">
    <property type="entry name" value="GTP CYCLOHYDROLASE III"/>
    <property type="match status" value="1"/>
</dbReference>
<dbReference type="PANTHER" id="PTHR42202:SF1">
    <property type="entry name" value="GTP CYCLOHYDROLASE III"/>
    <property type="match status" value="1"/>
</dbReference>
<dbReference type="Pfam" id="PF05165">
    <property type="entry name" value="GCH_III"/>
    <property type="match status" value="1"/>
</dbReference>
<dbReference type="PIRSF" id="PIRSF009265">
    <property type="entry name" value="GTP_cyclohydro_3"/>
    <property type="match status" value="1"/>
</dbReference>
<proteinExistence type="inferred from homology"/>
<sequence length="253" mass="27758">MTNTQVTLVQIDNYGPWTVTPEPRREVDLQTLQSRLYADLSQLIGNRMGYVFFTRFDNMVAVTNGLDADAHALIQESVGNRYPVTVSLSIGVDSSPAAALGTATDQLQDAGSAQDKGRTEILRGDPIQPSERTDTDVQIAHFDVNDATGKYTDQLNEFDSFINIEQGYAELMRYMRHENDSLSFFVGGDNIIAVCDGIDEAAYLDAIEHVNETVGVELKVGVGLDRTAQAAGMAAKHALETCREENTDVEFAR</sequence>
<name>GCH3_NATPD</name>
<reference key="1">
    <citation type="journal article" date="2005" name="Genome Res.">
        <title>Living with two extremes: conclusions from the genome sequence of Natronomonas pharaonis.</title>
        <authorList>
            <person name="Falb M."/>
            <person name="Pfeiffer F."/>
            <person name="Palm P."/>
            <person name="Rodewald K."/>
            <person name="Hickmann V."/>
            <person name="Tittor J."/>
            <person name="Oesterhelt D."/>
        </authorList>
    </citation>
    <scope>NUCLEOTIDE SEQUENCE [LARGE SCALE GENOMIC DNA]</scope>
    <source>
        <strain>ATCC 35678 / DSM 2160 / CIP 103997 / JCM 8858 / NBRC 14720 / NCIMB 2260 / Gabara</strain>
    </source>
</reference>
<comment type="function">
    <text evidence="1">Catalyzes the formation of 2-amino-5-formylamino-6-ribofuranosylamino-4(3H)-pyrimidinone ribonucleotide monophosphate and inorganic phosphate from GTP. Also has an independent pyrophosphate phosphohydrolase activity.</text>
</comment>
<comment type="catalytic activity">
    <reaction evidence="1">
        <text>GTP + 3 H2O = 2-amino-5-formylamino-6-(5-phospho-D-ribosylamino)pyrimidin-4(3H)-one + 2 phosphate + 2 H(+)</text>
        <dbReference type="Rhea" id="RHEA:22468"/>
        <dbReference type="ChEBI" id="CHEBI:15377"/>
        <dbReference type="ChEBI" id="CHEBI:15378"/>
        <dbReference type="ChEBI" id="CHEBI:37565"/>
        <dbReference type="ChEBI" id="CHEBI:43474"/>
        <dbReference type="ChEBI" id="CHEBI:57258"/>
        <dbReference type="EC" id="3.5.4.29"/>
    </reaction>
</comment>
<comment type="similarity">
    <text evidence="1">Belongs to the archaeal-type GTP cyclohydrolase family.</text>
</comment>
<protein>
    <recommendedName>
        <fullName evidence="1">GTP cyclohydrolase III</fullName>
        <ecNumber evidence="1">3.5.4.29</ecNumber>
    </recommendedName>
</protein>
<accession>Q3INZ0</accession>
<organism>
    <name type="scientific">Natronomonas pharaonis (strain ATCC 35678 / DSM 2160 / CIP 103997 / JCM 8858 / NBRC 14720 / NCIMB 2260 / Gabara)</name>
    <name type="common">Halobacterium pharaonis</name>
    <dbReference type="NCBI Taxonomy" id="348780"/>
    <lineage>
        <taxon>Archaea</taxon>
        <taxon>Methanobacteriati</taxon>
        <taxon>Methanobacteriota</taxon>
        <taxon>Stenosarchaea group</taxon>
        <taxon>Halobacteria</taxon>
        <taxon>Halobacteriales</taxon>
        <taxon>Haloarculaceae</taxon>
        <taxon>Natronomonas</taxon>
    </lineage>
</organism>
<feature type="chain" id="PRO_1000056696" description="GTP cyclohydrolase III">
    <location>
        <begin position="1"/>
        <end position="253"/>
    </location>
</feature>
<keyword id="KW-0342">GTP-binding</keyword>
<keyword id="KW-0378">Hydrolase</keyword>
<keyword id="KW-0547">Nucleotide-binding</keyword>
<keyword id="KW-1185">Reference proteome</keyword>
<evidence type="ECO:0000255" key="1">
    <source>
        <dbReference type="HAMAP-Rule" id="MF_00608"/>
    </source>
</evidence>